<comment type="subcellular location">
    <subcellularLocation>
        <location evidence="4">Cell membrane</location>
        <topology evidence="4">Single-pass type I membrane protein</topology>
    </subcellularLocation>
</comment>
<comment type="similarity">
    <text evidence="4">Belongs to the RLP family.</text>
</comment>
<protein>
    <recommendedName>
        <fullName evidence="3">Receptor-like protein 6</fullName>
        <shortName evidence="3">AtRLP6</shortName>
    </recommendedName>
</protein>
<reference key="1">
    <citation type="journal article" date="2000" name="Nature">
        <title>Sequence and analysis of chromosome 1 of the plant Arabidopsis thaliana.</title>
        <authorList>
            <person name="Theologis A."/>
            <person name="Ecker J.R."/>
            <person name="Palm C.J."/>
            <person name="Federspiel N.A."/>
            <person name="Kaul S."/>
            <person name="White O."/>
            <person name="Alonso J."/>
            <person name="Altafi H."/>
            <person name="Araujo R."/>
            <person name="Bowman C.L."/>
            <person name="Brooks S.Y."/>
            <person name="Buehler E."/>
            <person name="Chan A."/>
            <person name="Chao Q."/>
            <person name="Chen H."/>
            <person name="Cheuk R.F."/>
            <person name="Chin C.W."/>
            <person name="Chung M.K."/>
            <person name="Conn L."/>
            <person name="Conway A.B."/>
            <person name="Conway A.R."/>
            <person name="Creasy T.H."/>
            <person name="Dewar K."/>
            <person name="Dunn P."/>
            <person name="Etgu P."/>
            <person name="Feldblyum T.V."/>
            <person name="Feng J.-D."/>
            <person name="Fong B."/>
            <person name="Fujii C.Y."/>
            <person name="Gill J.E."/>
            <person name="Goldsmith A.D."/>
            <person name="Haas B."/>
            <person name="Hansen N.F."/>
            <person name="Hughes B."/>
            <person name="Huizar L."/>
            <person name="Hunter J.L."/>
            <person name="Jenkins J."/>
            <person name="Johnson-Hopson C."/>
            <person name="Khan S."/>
            <person name="Khaykin E."/>
            <person name="Kim C.J."/>
            <person name="Koo H.L."/>
            <person name="Kremenetskaia I."/>
            <person name="Kurtz D.B."/>
            <person name="Kwan A."/>
            <person name="Lam B."/>
            <person name="Langin-Hooper S."/>
            <person name="Lee A."/>
            <person name="Lee J.M."/>
            <person name="Lenz C.A."/>
            <person name="Li J.H."/>
            <person name="Li Y.-P."/>
            <person name="Lin X."/>
            <person name="Liu S.X."/>
            <person name="Liu Z.A."/>
            <person name="Luros J.S."/>
            <person name="Maiti R."/>
            <person name="Marziali A."/>
            <person name="Militscher J."/>
            <person name="Miranda M."/>
            <person name="Nguyen M."/>
            <person name="Nierman W.C."/>
            <person name="Osborne B.I."/>
            <person name="Pai G."/>
            <person name="Peterson J."/>
            <person name="Pham P.K."/>
            <person name="Rizzo M."/>
            <person name="Rooney T."/>
            <person name="Rowley D."/>
            <person name="Sakano H."/>
            <person name="Salzberg S.L."/>
            <person name="Schwartz J.R."/>
            <person name="Shinn P."/>
            <person name="Southwick A.M."/>
            <person name="Sun H."/>
            <person name="Tallon L.J."/>
            <person name="Tambunga G."/>
            <person name="Toriumi M.J."/>
            <person name="Town C.D."/>
            <person name="Utterback T."/>
            <person name="Van Aken S."/>
            <person name="Vaysberg M."/>
            <person name="Vysotskaia V.S."/>
            <person name="Walker M."/>
            <person name="Wu D."/>
            <person name="Yu G."/>
            <person name="Fraser C.M."/>
            <person name="Venter J.C."/>
            <person name="Davis R.W."/>
        </authorList>
    </citation>
    <scope>NUCLEOTIDE SEQUENCE [LARGE SCALE GENOMIC DNA]</scope>
    <source>
        <strain>cv. Columbia</strain>
    </source>
</reference>
<reference key="2">
    <citation type="journal article" date="2017" name="Plant J.">
        <title>Araport11: a complete reannotation of the Arabidopsis thaliana reference genome.</title>
        <authorList>
            <person name="Cheng C.Y."/>
            <person name="Krishnakumar V."/>
            <person name="Chan A.P."/>
            <person name="Thibaud-Nissen F."/>
            <person name="Schobel S."/>
            <person name="Town C.D."/>
        </authorList>
    </citation>
    <scope>GENOME REANNOTATION</scope>
    <source>
        <strain>cv. Columbia</strain>
    </source>
</reference>
<reference key="3">
    <citation type="journal article" date="2005" name="Plant Physiol.">
        <title>Phylogenomic analysis of the receptor-like proteins of rice and Arabidopsis.</title>
        <authorList>
            <person name="Fritz-Laylin L.K."/>
            <person name="Krishnamurthy N."/>
            <person name="Toer M."/>
            <person name="Sjoelander K.V."/>
            <person name="Jones J.D."/>
        </authorList>
    </citation>
    <scope>GENE FAMILY</scope>
</reference>
<reference key="4">
    <citation type="journal article" date="2008" name="Plant Physiol.">
        <title>A genome-wide functional investigation into the roles of receptor-like proteins in Arabidopsis.</title>
        <authorList>
            <person name="Wang G."/>
            <person name="Ellendorff U."/>
            <person name="Kemp B."/>
            <person name="Mansfield J.W."/>
            <person name="Forsyth A."/>
            <person name="Mitchell K."/>
            <person name="Bastas K."/>
            <person name="Liu C.-M."/>
            <person name="Woods-Toer A."/>
            <person name="Zipfel C."/>
            <person name="de Wit P.J.G.M."/>
            <person name="Jones J.D.G."/>
            <person name="Toer M."/>
            <person name="Thomma B.P.H.J."/>
        </authorList>
    </citation>
    <scope>GENE FAMILY</scope>
    <scope>NOMENCLATURE</scope>
</reference>
<gene>
    <name evidence="3" type="primary">RLP6</name>
    <name evidence="5" type="ordered locus">At1g45616</name>
    <name evidence="6" type="ORF">F2G19.6</name>
</gene>
<dbReference type="EMBL" id="AC083835">
    <property type="protein sequence ID" value="AAG50623.1"/>
    <property type="molecule type" value="Genomic_DNA"/>
</dbReference>
<dbReference type="EMBL" id="CP002684">
    <property type="protein sequence ID" value="AEE32120.1"/>
    <property type="molecule type" value="Genomic_DNA"/>
</dbReference>
<dbReference type="PIR" id="H96510">
    <property type="entry name" value="H96510"/>
</dbReference>
<dbReference type="RefSeq" id="NP_175139.1">
    <property type="nucleotide sequence ID" value="NM_103599.2"/>
</dbReference>
<dbReference type="SMR" id="Q9C637"/>
<dbReference type="STRING" id="3702.Q9C637"/>
<dbReference type="GlyCosmos" id="Q9C637">
    <property type="glycosylation" value="20 sites, No reported glycans"/>
</dbReference>
<dbReference type="GlyGen" id="Q9C637">
    <property type="glycosylation" value="20 sites"/>
</dbReference>
<dbReference type="iPTMnet" id="Q9C637"/>
<dbReference type="PaxDb" id="3702-AT1G45616.1"/>
<dbReference type="EnsemblPlants" id="AT1G45616.1">
    <property type="protein sequence ID" value="AT1G45616.1"/>
    <property type="gene ID" value="AT1G45616"/>
</dbReference>
<dbReference type="GeneID" id="841101"/>
<dbReference type="Gramene" id="AT1G45616.1">
    <property type="protein sequence ID" value="AT1G45616.1"/>
    <property type="gene ID" value="AT1G45616"/>
</dbReference>
<dbReference type="KEGG" id="ath:AT1G45616"/>
<dbReference type="Araport" id="AT1G45616"/>
<dbReference type="TAIR" id="AT1G45616">
    <property type="gene designation" value="RLP6"/>
</dbReference>
<dbReference type="eggNOG" id="KOG0619">
    <property type="taxonomic scope" value="Eukaryota"/>
</dbReference>
<dbReference type="HOGENOM" id="CLU_000288_18_3_1"/>
<dbReference type="InParanoid" id="Q9C637"/>
<dbReference type="OMA" id="YNQNFCR"/>
<dbReference type="PhylomeDB" id="Q9C637"/>
<dbReference type="PRO" id="PR:Q9C637"/>
<dbReference type="Proteomes" id="UP000006548">
    <property type="component" value="Chromosome 1"/>
</dbReference>
<dbReference type="ExpressionAtlas" id="Q9C637">
    <property type="expression patterns" value="baseline and differential"/>
</dbReference>
<dbReference type="GO" id="GO:0005886">
    <property type="term" value="C:plasma membrane"/>
    <property type="evidence" value="ECO:0007669"/>
    <property type="project" value="UniProtKB-SubCell"/>
</dbReference>
<dbReference type="FunFam" id="3.80.10.10:FF:001166">
    <property type="entry name" value="Cf2-like protein"/>
    <property type="match status" value="1"/>
</dbReference>
<dbReference type="FunFam" id="3.80.10.10:FF:000095">
    <property type="entry name" value="LRR receptor-like serine/threonine-protein kinase GSO1"/>
    <property type="match status" value="1"/>
</dbReference>
<dbReference type="FunFam" id="3.80.10.10:FF:000213">
    <property type="entry name" value="Tyrosine-sulfated glycopeptide receptor 1"/>
    <property type="match status" value="2"/>
</dbReference>
<dbReference type="Gene3D" id="3.80.10.10">
    <property type="entry name" value="Ribonuclease Inhibitor"/>
    <property type="match status" value="4"/>
</dbReference>
<dbReference type="InterPro" id="IPR001611">
    <property type="entry name" value="Leu-rich_rpt"/>
</dbReference>
<dbReference type="InterPro" id="IPR003591">
    <property type="entry name" value="Leu-rich_rpt_typical-subtyp"/>
</dbReference>
<dbReference type="InterPro" id="IPR032675">
    <property type="entry name" value="LRR_dom_sf"/>
</dbReference>
<dbReference type="InterPro" id="IPR013210">
    <property type="entry name" value="LRR_N_plant-typ"/>
</dbReference>
<dbReference type="InterPro" id="IPR046956">
    <property type="entry name" value="RLP23-like"/>
</dbReference>
<dbReference type="PANTHER" id="PTHR48061">
    <property type="entry name" value="LEUCINE-RICH REPEAT RECEPTOR PROTEIN KINASE EMS1-LIKE-RELATED"/>
    <property type="match status" value="1"/>
</dbReference>
<dbReference type="PANTHER" id="PTHR48061:SF50">
    <property type="entry name" value="LEUCINE-RICH REPEAT-CONTAINING N-TERMINAL PLANT-TYPE DOMAIN-CONTAINING PROTEIN"/>
    <property type="match status" value="1"/>
</dbReference>
<dbReference type="Pfam" id="PF00560">
    <property type="entry name" value="LRR_1"/>
    <property type="match status" value="3"/>
</dbReference>
<dbReference type="Pfam" id="PF13855">
    <property type="entry name" value="LRR_8"/>
    <property type="match status" value="3"/>
</dbReference>
<dbReference type="Pfam" id="PF08263">
    <property type="entry name" value="LRRNT_2"/>
    <property type="match status" value="2"/>
</dbReference>
<dbReference type="PRINTS" id="PR00019">
    <property type="entry name" value="LEURICHRPT"/>
</dbReference>
<dbReference type="SMART" id="SM00369">
    <property type="entry name" value="LRR_TYP"/>
    <property type="match status" value="10"/>
</dbReference>
<dbReference type="SUPFAM" id="SSF52058">
    <property type="entry name" value="L domain-like"/>
    <property type="match status" value="1"/>
</dbReference>
<dbReference type="SUPFAM" id="SSF52047">
    <property type="entry name" value="RNI-like"/>
    <property type="match status" value="2"/>
</dbReference>
<feature type="signal peptide" evidence="1">
    <location>
        <begin position="1"/>
        <end position="25"/>
    </location>
</feature>
<feature type="chain" id="PRO_5010510561" description="Receptor-like protein 6">
    <location>
        <begin position="26"/>
        <end position="994"/>
    </location>
</feature>
<feature type="topological domain" description="Extracellular" evidence="1">
    <location>
        <begin position="26"/>
        <end position="946"/>
    </location>
</feature>
<feature type="transmembrane region" description="Helical" evidence="1">
    <location>
        <begin position="947"/>
        <end position="967"/>
    </location>
</feature>
<feature type="topological domain" description="Cytoplasmic" evidence="1">
    <location>
        <begin position="968"/>
        <end position="994"/>
    </location>
</feature>
<feature type="repeat" description="LRR 1" evidence="1">
    <location>
        <begin position="122"/>
        <end position="146"/>
    </location>
</feature>
<feature type="repeat" description="LRR 2" evidence="1">
    <location>
        <begin position="148"/>
        <end position="171"/>
    </location>
</feature>
<feature type="repeat" description="LRR 3" evidence="1">
    <location>
        <begin position="174"/>
        <end position="199"/>
    </location>
</feature>
<feature type="repeat" description="LRR 4" evidence="1">
    <location>
        <begin position="205"/>
        <end position="228"/>
    </location>
</feature>
<feature type="repeat" description="LRR 5" evidence="1">
    <location>
        <begin position="230"/>
        <end position="253"/>
    </location>
</feature>
<feature type="repeat" description="LRR 6" evidence="1">
    <location>
        <begin position="254"/>
        <end position="278"/>
    </location>
</feature>
<feature type="repeat" description="LRR 7" evidence="1">
    <location>
        <begin position="280"/>
        <end position="301"/>
    </location>
</feature>
<feature type="repeat" description="LRR 8" evidence="1">
    <location>
        <begin position="302"/>
        <end position="325"/>
    </location>
</feature>
<feature type="repeat" description="LRR 9" evidence="1">
    <location>
        <begin position="326"/>
        <end position="349"/>
    </location>
</feature>
<feature type="repeat" description="LRR 10" evidence="1">
    <location>
        <begin position="350"/>
        <end position="373"/>
    </location>
</feature>
<feature type="repeat" description="LRR 11" evidence="1">
    <location>
        <begin position="375"/>
        <end position="397"/>
    </location>
</feature>
<feature type="repeat" description="LRR 12" evidence="1">
    <location>
        <begin position="398"/>
        <end position="421"/>
    </location>
</feature>
<feature type="repeat" description="LRR 13" evidence="1">
    <location>
        <begin position="423"/>
        <end position="445"/>
    </location>
</feature>
<feature type="repeat" description="LRR 14" evidence="1">
    <location>
        <begin position="446"/>
        <end position="471"/>
    </location>
</feature>
<feature type="repeat" description="LRR 15" evidence="1">
    <location>
        <begin position="477"/>
        <end position="497"/>
    </location>
</feature>
<feature type="repeat" description="LRR 16" evidence="1">
    <location>
        <begin position="498"/>
        <end position="520"/>
    </location>
</feature>
<feature type="repeat" description="LRR 17" evidence="1">
    <location>
        <begin position="521"/>
        <end position="544"/>
    </location>
</feature>
<feature type="repeat" description="LRR 18" evidence="1">
    <location>
        <begin position="546"/>
        <end position="569"/>
    </location>
</feature>
<feature type="repeat" description="LRR 19" evidence="1">
    <location>
        <begin position="571"/>
        <end position="595"/>
    </location>
</feature>
<feature type="repeat" description="LRR 20; degenerate" evidence="4">
    <location>
        <begin position="597"/>
        <end position="613"/>
    </location>
</feature>
<feature type="repeat" description="LRR 21" evidence="1">
    <location>
        <begin position="614"/>
        <end position="637"/>
    </location>
</feature>
<feature type="repeat" description="LRR 22" evidence="1">
    <location>
        <begin position="639"/>
        <end position="663"/>
    </location>
</feature>
<feature type="repeat" description="LRR 23" evidence="1">
    <location>
        <begin position="665"/>
        <end position="687"/>
    </location>
</feature>
<feature type="repeat" description="LRR 24" evidence="1">
    <location>
        <begin position="689"/>
        <end position="710"/>
    </location>
</feature>
<feature type="repeat" description="LRR 25" evidence="1">
    <location>
        <begin position="711"/>
        <end position="737"/>
    </location>
</feature>
<feature type="repeat" description="LRR 26" evidence="1">
    <location>
        <begin position="739"/>
        <end position="762"/>
    </location>
</feature>
<feature type="repeat" description="LRR 27" evidence="1">
    <location>
        <begin position="803"/>
        <end position="827"/>
    </location>
</feature>
<feature type="repeat" description="LRR 28" evidence="1">
    <location>
        <begin position="828"/>
        <end position="851"/>
    </location>
</feature>
<feature type="repeat" description="LRR 29" evidence="1">
    <location>
        <begin position="852"/>
        <end position="875"/>
    </location>
</feature>
<feature type="repeat" description="LRR 30" evidence="1">
    <location>
        <begin position="877"/>
        <end position="900"/>
    </location>
</feature>
<feature type="glycosylation site" description="N-linked (GlcNAc...) asparagine" evidence="2">
    <location>
        <position position="116"/>
    </location>
</feature>
<feature type="glycosylation site" description="N-linked (GlcNAc...) asparagine" evidence="2">
    <location>
        <position position="134"/>
    </location>
</feature>
<feature type="glycosylation site" description="N-linked (GlcNAc...) asparagine" evidence="2">
    <location>
        <position position="154"/>
    </location>
</feature>
<feature type="glycosylation site" description="N-linked (GlcNAc...) asparagine" evidence="2">
    <location>
        <position position="277"/>
    </location>
</feature>
<feature type="glycosylation site" description="N-linked (GlcNAc...) asparagine" evidence="2">
    <location>
        <position position="287"/>
    </location>
</feature>
<feature type="glycosylation site" description="N-linked (GlcNAc...) asparagine" evidence="2">
    <location>
        <position position="420"/>
    </location>
</feature>
<feature type="glycosylation site" description="N-linked (GlcNAc...) asparagine" evidence="2">
    <location>
        <position position="435"/>
    </location>
</feature>
<feature type="glycosylation site" description="N-linked (GlcNAc...) asparagine" evidence="2">
    <location>
        <position position="442"/>
    </location>
</feature>
<feature type="glycosylation site" description="N-linked (GlcNAc...) asparagine" evidence="2">
    <location>
        <position position="489"/>
    </location>
</feature>
<feature type="glycosylation site" description="N-linked (GlcNAc...) asparagine" evidence="2">
    <location>
        <position position="522"/>
    </location>
</feature>
<feature type="glycosylation site" description="N-linked (GlcNAc...) asparagine" evidence="2">
    <location>
        <position position="554"/>
    </location>
</feature>
<feature type="glycosylation site" description="N-linked (GlcNAc...) asparagine" evidence="2">
    <location>
        <position position="561"/>
    </location>
</feature>
<feature type="glycosylation site" description="N-linked (GlcNAc...) asparagine" evidence="2">
    <location>
        <position position="602"/>
    </location>
</feature>
<feature type="glycosylation site" description="N-linked (GlcNAc...) asparagine" evidence="2">
    <location>
        <position position="649"/>
    </location>
</feature>
<feature type="glycosylation site" description="N-linked (GlcNAc...) asparagine" evidence="2">
    <location>
        <position position="701"/>
    </location>
</feature>
<feature type="glycosylation site" description="N-linked (GlcNAc...) asparagine" evidence="2">
    <location>
        <position position="762"/>
    </location>
</feature>
<feature type="glycosylation site" description="N-linked (GlcNAc...) asparagine" evidence="2">
    <location>
        <position position="834"/>
    </location>
</feature>
<feature type="glycosylation site" description="N-linked (GlcNAc...) asparagine" evidence="2">
    <location>
        <position position="850"/>
    </location>
</feature>
<feature type="glycosylation site" description="N-linked (GlcNAc...) asparagine" evidence="2">
    <location>
        <position position="882"/>
    </location>
</feature>
<feature type="glycosylation site" description="N-linked (GlcNAc...) asparagine" evidence="2">
    <location>
        <position position="902"/>
    </location>
</feature>
<accession>Q9C637</accession>
<evidence type="ECO:0000255" key="1"/>
<evidence type="ECO:0000255" key="2">
    <source>
        <dbReference type="PROSITE-ProRule" id="PRU00498"/>
    </source>
</evidence>
<evidence type="ECO:0000303" key="3">
    <source>
    </source>
</evidence>
<evidence type="ECO:0000305" key="4"/>
<evidence type="ECO:0000312" key="5">
    <source>
        <dbReference type="Araport" id="AT1G45616"/>
    </source>
</evidence>
<evidence type="ECO:0000312" key="6">
    <source>
        <dbReference type="EMBL" id="AAG50623.1"/>
    </source>
</evidence>
<organism>
    <name type="scientific">Arabidopsis thaliana</name>
    <name type="common">Mouse-ear cress</name>
    <dbReference type="NCBI Taxonomy" id="3702"/>
    <lineage>
        <taxon>Eukaryota</taxon>
        <taxon>Viridiplantae</taxon>
        <taxon>Streptophyta</taxon>
        <taxon>Embryophyta</taxon>
        <taxon>Tracheophyta</taxon>
        <taxon>Spermatophyta</taxon>
        <taxon>Magnoliopsida</taxon>
        <taxon>eudicotyledons</taxon>
        <taxon>Gunneridae</taxon>
        <taxon>Pentapetalae</taxon>
        <taxon>rosids</taxon>
        <taxon>malvids</taxon>
        <taxon>Brassicales</taxon>
        <taxon>Brassicaceae</taxon>
        <taxon>Camelineae</taxon>
        <taxon>Arabidopsis</taxon>
    </lineage>
</organism>
<keyword id="KW-1003">Cell membrane</keyword>
<keyword id="KW-0325">Glycoprotein</keyword>
<keyword id="KW-0433">Leucine-rich repeat</keyword>
<keyword id="KW-0472">Membrane</keyword>
<keyword id="KW-0675">Receptor</keyword>
<keyword id="KW-1185">Reference proteome</keyword>
<keyword id="KW-0677">Repeat</keyword>
<keyword id="KW-0732">Signal</keyword>
<keyword id="KW-0812">Transmembrane</keyword>
<keyword id="KW-1133">Transmembrane helix</keyword>
<sequence>MTGLYSSMSFFLRTIVLLFSTSSFCNTFASLTQDSCHPDQRDALLEFKNEFKIWYPNGFLDIDGVLMDVTSYPKTKSWTKNSDCCYWDGITCDTKSGKVTGLDLSCSCLHGRLEPNSSLFRLQHLQSVNLAYNNFTNSPIPAEFSKFMRLERLNLSRSSFSGHISIKLLQLTNLVSLDLSSSFPYSPSSLSIEKPLFLHLLALNFMNLRELDMSSVDISSAIPIEFSYMWSLRSLTLKGCNLLGRFPNSVLLIPNLESISLDHNLNLEGSLPNFLRNNSLLKLSIYNTSFSGTIPNSISNLKHLTSLKLQQSAFSGRIPSSLRSLSHLSNLVLSENNFVGEIPSSVSNLKQLTLFDVSDNNLNGNFPSSLLNLNQLRYIDICSNHFTGFLPPTISQLSNLEFFSACDNSFTGSIPSSLFNISSLTTLGLSYNQLNDTTNIKNISLLHNLQRLLLDNNNFKASQVDLDVFLSLKRLVSLALSGIPLSTTNITSDSEFSSHLEYLELSGCNIIEFPEFIRNQRNLSSIDLSNNNIKGQVPNWLWRLPELSTVDLSNNSLIGFNGSLKALSGSKIVMLDLSSNAFQGPLFMPPRGIQYFLGSYNNFTGYIPPSICGLANPLILDLSNNNLHGLIPRCLEAQMSSLSVLNLRNNSLDGSLPNIFMNAKVLSSLDVSHNTLEGKLPASLAGCSALEILNVESNNINDTFPFWLNSLPKLQVLVLRSNNFRGTLHNVDGVWFGFPLLRITDVSHNDFVGTLPSDYFMNWTAISKSETELQYIGDPEDYGYYTSLVLMNKGVSMEMQRILTKYTVIDFAGNKIQGKIPESVGILKELHVLNLSSNAFTGHIPSSLANLTNLESLDISQNKIGGEIPPELGTLSSLEWINVSHNQLVGSIPQGTQFHRQNCSSYEGNPGIYGSSLKDVCGDIHAPRPPQAVLPHSSSSSSEEDELISWIAACLGFAPGMVFGLTMGYIMTSHKHEWFMDTFGRRKGRSTRTR</sequence>
<name>RLP6_ARATH</name>
<proteinExistence type="inferred from homology"/>